<accession>P67973</accession>
<accession>P01312</accession>
<protein>
    <recommendedName>
        <fullName>Insulin</fullName>
    </recommendedName>
    <component>
        <recommendedName>
            <fullName>Insulin B chain</fullName>
        </recommendedName>
    </component>
    <component>
        <recommendedName>
            <fullName>Insulin A chain</fullName>
        </recommendedName>
    </component>
</protein>
<reference key="1">
    <citation type="journal article" date="1964" name="J. Biochem.">
        <title>The amino acid sequence in fin-whale insulin.</title>
        <authorList>
            <person name="Hama H."/>
            <person name="Titani K."/>
            <person name="Sakaki S."/>
            <person name="Narita K."/>
        </authorList>
    </citation>
    <scope>PROTEIN SEQUENCE</scope>
</reference>
<keyword id="KW-0002">3D-structure</keyword>
<keyword id="KW-0119">Carbohydrate metabolism</keyword>
<keyword id="KW-0903">Direct protein sequencing</keyword>
<keyword id="KW-1015">Disulfide bond</keyword>
<keyword id="KW-0313">Glucose metabolism</keyword>
<keyword id="KW-0372">Hormone</keyword>
<keyword id="KW-0964">Secreted</keyword>
<dbReference type="PIR" id="A91918">
    <property type="entry name" value="INWHF"/>
</dbReference>
<dbReference type="PDB" id="1BZV">
    <property type="method" value="NMR"/>
    <property type="chains" value="A=31-51"/>
</dbReference>
<dbReference type="PDB" id="8PJC">
    <property type="method" value="X-ray"/>
    <property type="resolution" value="2.14 A"/>
    <property type="chains" value="A=1-51"/>
</dbReference>
<dbReference type="PDB" id="8PJH">
    <property type="method" value="X-ray"/>
    <property type="resolution" value="1.50 A"/>
    <property type="chains" value="A=1-51"/>
</dbReference>
<dbReference type="PDBsum" id="1BZV"/>
<dbReference type="PDBsum" id="8PJC"/>
<dbReference type="PDBsum" id="8PJH"/>
<dbReference type="SMR" id="P67973"/>
<dbReference type="GO" id="GO:0005615">
    <property type="term" value="C:extracellular space"/>
    <property type="evidence" value="ECO:0007669"/>
    <property type="project" value="TreeGrafter"/>
</dbReference>
<dbReference type="GO" id="GO:0005179">
    <property type="term" value="F:hormone activity"/>
    <property type="evidence" value="ECO:0007669"/>
    <property type="project" value="UniProtKB-KW"/>
</dbReference>
<dbReference type="GO" id="GO:1901701">
    <property type="term" value="P:cellular response to oxygen-containing compound"/>
    <property type="evidence" value="ECO:0007669"/>
    <property type="project" value="UniProtKB-ARBA"/>
</dbReference>
<dbReference type="GO" id="GO:0042593">
    <property type="term" value="P:glucose homeostasis"/>
    <property type="evidence" value="ECO:0007669"/>
    <property type="project" value="TreeGrafter"/>
</dbReference>
<dbReference type="GO" id="GO:0006006">
    <property type="term" value="P:glucose metabolic process"/>
    <property type="evidence" value="ECO:0007669"/>
    <property type="project" value="UniProtKB-KW"/>
</dbReference>
<dbReference type="GO" id="GO:0050714">
    <property type="term" value="P:positive regulation of protein secretion"/>
    <property type="evidence" value="ECO:0007669"/>
    <property type="project" value="TreeGrafter"/>
</dbReference>
<dbReference type="CDD" id="cd04367">
    <property type="entry name" value="IlGF_insulin_like"/>
    <property type="match status" value="1"/>
</dbReference>
<dbReference type="Gene3D" id="1.10.100.10">
    <property type="entry name" value="Insulin-like"/>
    <property type="match status" value="2"/>
</dbReference>
<dbReference type="InterPro" id="IPR004825">
    <property type="entry name" value="Insulin"/>
</dbReference>
<dbReference type="InterPro" id="IPR016179">
    <property type="entry name" value="Insulin-like"/>
</dbReference>
<dbReference type="InterPro" id="IPR036438">
    <property type="entry name" value="Insulin-like_sf"/>
</dbReference>
<dbReference type="InterPro" id="IPR022353">
    <property type="entry name" value="Insulin_CS"/>
</dbReference>
<dbReference type="InterPro" id="IPR022352">
    <property type="entry name" value="Insulin_family"/>
</dbReference>
<dbReference type="PANTHER" id="PTHR11454:SF9">
    <property type="entry name" value="INSULIN"/>
    <property type="match status" value="1"/>
</dbReference>
<dbReference type="PANTHER" id="PTHR11454">
    <property type="entry name" value="INSULIN/INSULIN GROWTH FACTOR"/>
    <property type="match status" value="1"/>
</dbReference>
<dbReference type="Pfam" id="PF00049">
    <property type="entry name" value="Insulin"/>
    <property type="match status" value="1"/>
</dbReference>
<dbReference type="PRINTS" id="PR00277">
    <property type="entry name" value="INSULIN"/>
</dbReference>
<dbReference type="PRINTS" id="PR00276">
    <property type="entry name" value="INSULINFAMLY"/>
</dbReference>
<dbReference type="SMART" id="SM00078">
    <property type="entry name" value="IlGF"/>
    <property type="match status" value="1"/>
</dbReference>
<dbReference type="SUPFAM" id="SSF56994">
    <property type="entry name" value="Insulin-like"/>
    <property type="match status" value="1"/>
</dbReference>
<dbReference type="PROSITE" id="PS00262">
    <property type="entry name" value="INSULIN"/>
    <property type="match status" value="1"/>
</dbReference>
<organism>
    <name type="scientific">Balaenoptera physalus</name>
    <name type="common">Fin whale</name>
    <name type="synonym">Balaena physalus</name>
    <dbReference type="NCBI Taxonomy" id="9770"/>
    <lineage>
        <taxon>Eukaryota</taxon>
        <taxon>Metazoa</taxon>
        <taxon>Chordata</taxon>
        <taxon>Craniata</taxon>
        <taxon>Vertebrata</taxon>
        <taxon>Euteleostomi</taxon>
        <taxon>Mammalia</taxon>
        <taxon>Eutheria</taxon>
        <taxon>Laurasiatheria</taxon>
        <taxon>Artiodactyla</taxon>
        <taxon>Whippomorpha</taxon>
        <taxon>Cetacea</taxon>
        <taxon>Mysticeti</taxon>
        <taxon>Balaenopteridae</taxon>
        <taxon>Balaenoptera</taxon>
    </lineage>
</organism>
<name>INS_BALPH</name>
<gene>
    <name type="primary">INS</name>
</gene>
<evidence type="ECO:0000305" key="1"/>
<evidence type="ECO:0007829" key="2">
    <source>
        <dbReference type="PDB" id="1BZV"/>
    </source>
</evidence>
<sequence>FVNQHLCGSHLVEALYLVCGERGFFYTPKAGIVEQCCTSICSLYQLENYCN</sequence>
<comment type="function">
    <text>Insulin decreases blood glucose concentration. It increases cell permeability to monosaccharides, amino acids and fatty acids. It accelerates glycolysis, the pentose phosphate cycle, and glycogen synthesis in liver.</text>
</comment>
<comment type="subunit">
    <text>Heterodimer of a B chain and an A chain linked by two disulfide bonds.</text>
</comment>
<comment type="subcellular location">
    <subcellularLocation>
        <location>Secreted</location>
    </subcellularLocation>
</comment>
<comment type="similarity">
    <text evidence="1">Belongs to the insulin family.</text>
</comment>
<feature type="peptide" id="PRO_0000015760" description="Insulin B chain">
    <location>
        <begin position="1"/>
        <end position="30"/>
    </location>
</feature>
<feature type="peptide" id="PRO_0000015761" description="Insulin A chain">
    <location>
        <begin position="31"/>
        <end position="51"/>
    </location>
</feature>
<feature type="disulfide bond" description="Interchain (between B and A chains)">
    <location>
        <begin position="7"/>
        <end position="37"/>
    </location>
</feature>
<feature type="disulfide bond" description="Interchain (between B and A chains)">
    <location>
        <begin position="19"/>
        <end position="50"/>
    </location>
</feature>
<feature type="disulfide bond">
    <location>
        <begin position="36"/>
        <end position="41"/>
    </location>
</feature>
<feature type="non-consecutive residues" evidence="1">
    <location>
        <begin position="30"/>
        <end position="31"/>
    </location>
</feature>
<feature type="helix" evidence="2">
    <location>
        <begin position="33"/>
        <end position="36"/>
    </location>
</feature>
<feature type="strand" evidence="2">
    <location>
        <begin position="37"/>
        <end position="39"/>
    </location>
</feature>
<feature type="helix" evidence="2">
    <location>
        <begin position="43"/>
        <end position="46"/>
    </location>
</feature>
<feature type="turn" evidence="2">
    <location>
        <begin position="47"/>
        <end position="49"/>
    </location>
</feature>
<proteinExistence type="evidence at protein level"/>